<comment type="similarity">
    <text evidence="1">Belongs to the elongation factor P family.</text>
</comment>
<name>EFPL_SALHS</name>
<sequence>MPRANEIKKGMVLNYNGKLLIVKDIDIQSPTARGAATLYKMRFSDVRTGLKVEERFKGDDIVDTVTLSRRGVDFSYVDGNEYVFMDKEDYTPYTFTKDQIEEELLFMPEGGMPDMQVLTWDGQLLALELPQTVDLEIVETAPGIKGASASARNKPATLSTGLVIQVPEYLSAGEKIRIHIEERRYMGRAD</sequence>
<accession>B4TAN5</accession>
<gene>
    <name evidence="1" type="primary">yeiP</name>
    <name type="ordered locus">SeHA_C2448</name>
</gene>
<proteinExistence type="inferred from homology"/>
<evidence type="ECO:0000255" key="1">
    <source>
        <dbReference type="HAMAP-Rule" id="MF_00646"/>
    </source>
</evidence>
<feature type="chain" id="PRO_1000130924" description="Elongation factor P-like protein">
    <location>
        <begin position="1"/>
        <end position="190"/>
    </location>
</feature>
<reference key="1">
    <citation type="journal article" date="2011" name="J. Bacteriol.">
        <title>Comparative genomics of 28 Salmonella enterica isolates: evidence for CRISPR-mediated adaptive sublineage evolution.</title>
        <authorList>
            <person name="Fricke W.F."/>
            <person name="Mammel M.K."/>
            <person name="McDermott P.F."/>
            <person name="Tartera C."/>
            <person name="White D.G."/>
            <person name="Leclerc J.E."/>
            <person name="Ravel J."/>
            <person name="Cebula T.A."/>
        </authorList>
    </citation>
    <scope>NUCLEOTIDE SEQUENCE [LARGE SCALE GENOMIC DNA]</scope>
    <source>
        <strain>SL476</strain>
    </source>
</reference>
<dbReference type="EMBL" id="CP001120">
    <property type="protein sequence ID" value="ACF67836.1"/>
    <property type="molecule type" value="Genomic_DNA"/>
</dbReference>
<dbReference type="RefSeq" id="WP_001136822.1">
    <property type="nucleotide sequence ID" value="NC_011083.1"/>
</dbReference>
<dbReference type="SMR" id="B4TAN5"/>
<dbReference type="GeneID" id="66756682"/>
<dbReference type="KEGG" id="seh:SeHA_C2448"/>
<dbReference type="HOGENOM" id="CLU_074944_2_0_6"/>
<dbReference type="Proteomes" id="UP000001866">
    <property type="component" value="Chromosome"/>
</dbReference>
<dbReference type="GO" id="GO:0005829">
    <property type="term" value="C:cytosol"/>
    <property type="evidence" value="ECO:0007669"/>
    <property type="project" value="UniProtKB-ARBA"/>
</dbReference>
<dbReference type="GO" id="GO:0003746">
    <property type="term" value="F:translation elongation factor activity"/>
    <property type="evidence" value="ECO:0007669"/>
    <property type="project" value="UniProtKB-UniRule"/>
</dbReference>
<dbReference type="GO" id="GO:0043043">
    <property type="term" value="P:peptide biosynthetic process"/>
    <property type="evidence" value="ECO:0007669"/>
    <property type="project" value="InterPro"/>
</dbReference>
<dbReference type="CDD" id="cd04470">
    <property type="entry name" value="S1_EF-P_repeat_1"/>
    <property type="match status" value="1"/>
</dbReference>
<dbReference type="CDD" id="cd05794">
    <property type="entry name" value="S1_EF-P_repeat_2"/>
    <property type="match status" value="1"/>
</dbReference>
<dbReference type="FunFam" id="2.40.50.140:FF:000004">
    <property type="entry name" value="Elongation factor P"/>
    <property type="match status" value="1"/>
</dbReference>
<dbReference type="FunFam" id="2.30.30.30:FF:000011">
    <property type="entry name" value="Elongation factor P-like protein"/>
    <property type="match status" value="1"/>
</dbReference>
<dbReference type="FunFam" id="2.40.50.140:FF:000053">
    <property type="entry name" value="Elongation factor P-like protein"/>
    <property type="match status" value="1"/>
</dbReference>
<dbReference type="Gene3D" id="2.30.30.30">
    <property type="match status" value="1"/>
</dbReference>
<dbReference type="Gene3D" id="2.40.50.140">
    <property type="entry name" value="Nucleic acid-binding proteins"/>
    <property type="match status" value="2"/>
</dbReference>
<dbReference type="HAMAP" id="MF_00646">
    <property type="entry name" value="EFP"/>
    <property type="match status" value="1"/>
</dbReference>
<dbReference type="InterPro" id="IPR015365">
    <property type="entry name" value="Elong-fact-P_C"/>
</dbReference>
<dbReference type="InterPro" id="IPR012340">
    <property type="entry name" value="NA-bd_OB-fold"/>
</dbReference>
<dbReference type="InterPro" id="IPR014722">
    <property type="entry name" value="Rib_uL2_dom2"/>
</dbReference>
<dbReference type="InterPro" id="IPR020599">
    <property type="entry name" value="Transl_elong_fac_P/YeiP"/>
</dbReference>
<dbReference type="InterPro" id="IPR013185">
    <property type="entry name" value="Transl_elong_KOW-like"/>
</dbReference>
<dbReference type="InterPro" id="IPR011897">
    <property type="entry name" value="Transl_elong_p-like_YeiP"/>
</dbReference>
<dbReference type="InterPro" id="IPR001059">
    <property type="entry name" value="Transl_elong_P/YeiP_cen"/>
</dbReference>
<dbReference type="InterPro" id="IPR013852">
    <property type="entry name" value="Transl_elong_P/YeiP_CS"/>
</dbReference>
<dbReference type="InterPro" id="IPR008991">
    <property type="entry name" value="Translation_prot_SH3-like_sf"/>
</dbReference>
<dbReference type="NCBIfam" id="NF001810">
    <property type="entry name" value="PRK00529.1"/>
    <property type="match status" value="1"/>
</dbReference>
<dbReference type="NCBIfam" id="NF003392">
    <property type="entry name" value="PRK04542.1"/>
    <property type="match status" value="1"/>
</dbReference>
<dbReference type="NCBIfam" id="TIGR02178">
    <property type="entry name" value="yeiP"/>
    <property type="match status" value="1"/>
</dbReference>
<dbReference type="PANTHER" id="PTHR30053">
    <property type="entry name" value="ELONGATION FACTOR P"/>
    <property type="match status" value="1"/>
</dbReference>
<dbReference type="PANTHER" id="PTHR30053:SF14">
    <property type="entry name" value="TRANSLATION ELONGATION FACTOR KOW-LIKE DOMAIN-CONTAINING PROTEIN"/>
    <property type="match status" value="1"/>
</dbReference>
<dbReference type="Pfam" id="PF01132">
    <property type="entry name" value="EFP"/>
    <property type="match status" value="1"/>
</dbReference>
<dbReference type="Pfam" id="PF08207">
    <property type="entry name" value="EFP_N"/>
    <property type="match status" value="1"/>
</dbReference>
<dbReference type="Pfam" id="PF09285">
    <property type="entry name" value="Elong-fact-P_C"/>
    <property type="match status" value="1"/>
</dbReference>
<dbReference type="PIRSF" id="PIRSF005901">
    <property type="entry name" value="EF-P"/>
    <property type="match status" value="1"/>
</dbReference>
<dbReference type="SMART" id="SM01185">
    <property type="entry name" value="EFP"/>
    <property type="match status" value="1"/>
</dbReference>
<dbReference type="SMART" id="SM00841">
    <property type="entry name" value="Elong-fact-P_C"/>
    <property type="match status" value="1"/>
</dbReference>
<dbReference type="SUPFAM" id="SSF50249">
    <property type="entry name" value="Nucleic acid-binding proteins"/>
    <property type="match status" value="2"/>
</dbReference>
<dbReference type="SUPFAM" id="SSF50104">
    <property type="entry name" value="Translation proteins SH3-like domain"/>
    <property type="match status" value="1"/>
</dbReference>
<dbReference type="PROSITE" id="PS01275">
    <property type="entry name" value="EFP"/>
    <property type="match status" value="1"/>
</dbReference>
<organism>
    <name type="scientific">Salmonella heidelberg (strain SL476)</name>
    <dbReference type="NCBI Taxonomy" id="454169"/>
    <lineage>
        <taxon>Bacteria</taxon>
        <taxon>Pseudomonadati</taxon>
        <taxon>Pseudomonadota</taxon>
        <taxon>Gammaproteobacteria</taxon>
        <taxon>Enterobacterales</taxon>
        <taxon>Enterobacteriaceae</taxon>
        <taxon>Salmonella</taxon>
    </lineage>
</organism>
<protein>
    <recommendedName>
        <fullName evidence="1">Elongation factor P-like protein</fullName>
    </recommendedName>
</protein>